<organism>
    <name type="scientific">Candida albicans (strain SC5314 / ATCC MYA-2876)</name>
    <name type="common">Yeast</name>
    <dbReference type="NCBI Taxonomy" id="237561"/>
    <lineage>
        <taxon>Eukaryota</taxon>
        <taxon>Fungi</taxon>
        <taxon>Dikarya</taxon>
        <taxon>Ascomycota</taxon>
        <taxon>Saccharomycotina</taxon>
        <taxon>Pichiomycetes</taxon>
        <taxon>Debaryomycetaceae</taxon>
        <taxon>Candida/Lodderomyces clade</taxon>
        <taxon>Candida</taxon>
    </lineage>
</organism>
<evidence type="ECO:0000256" key="1">
    <source>
        <dbReference type="SAM" id="MobiDB-lite"/>
    </source>
</evidence>
<evidence type="ECO:0000305" key="2"/>
<sequence length="238" mass="26601">MDLKLPPTNPTNPQQAKTFMKSIEEDEKNKAEDLDIIKKEDIDEPKQEDTTDGNGGGGIGIVPTLQNIVATVNLDCRLDLKTIALHARNAEYNPKRFAAVIMRIRDPKTTALIFASGKMVVTGAKSEDDSKLASRKYARIIQKLGFNAKFCDFKIQNIVGSTDVKFAIRLEGLAFAHGTFSSYEPELFPGLIYRMVKPKIVLLIFVSGKIVLTGAKKREEIYDAFESIYPVLNEFRKN</sequence>
<gene>
    <name type="primary">TBP1</name>
    <name type="synonym">TBP</name>
    <name type="ordered locus">CAALFM_C110660WA</name>
    <name type="ORF">CaO19.1837</name>
    <name type="ORF">CaO19.9395</name>
</gene>
<proteinExistence type="evidence at transcript level"/>
<keyword id="KW-0238">DNA-binding</keyword>
<keyword id="KW-0539">Nucleus</keyword>
<keyword id="KW-1185">Reference proteome</keyword>
<keyword id="KW-0677">Repeat</keyword>
<keyword id="KW-0804">Transcription</keyword>
<protein>
    <recommendedName>
        <fullName>TATA-box-binding protein</fullName>
    </recommendedName>
    <alternativeName>
        <fullName>TATA sequence-binding protein</fullName>
        <shortName>TBP</shortName>
    </alternativeName>
    <alternativeName>
        <fullName>TATA-binding factor</fullName>
    </alternativeName>
    <alternativeName>
        <fullName>TATA-box factor</fullName>
    </alternativeName>
    <alternativeName>
        <fullName>Transcription initiation factor TFIID TBP subunit</fullName>
    </alternativeName>
</protein>
<dbReference type="EMBL" id="U95550">
    <property type="protein sequence ID" value="AAC49986.1"/>
    <property type="molecule type" value="mRNA"/>
</dbReference>
<dbReference type="EMBL" id="U95549">
    <property type="protein sequence ID" value="AAC49985.1"/>
    <property type="molecule type" value="Genomic_DNA"/>
</dbReference>
<dbReference type="EMBL" id="CP017623">
    <property type="protein sequence ID" value="AOW26693.1"/>
    <property type="molecule type" value="Genomic_DNA"/>
</dbReference>
<dbReference type="RefSeq" id="XP_710721.1">
    <property type="nucleotide sequence ID" value="XM_705629.1"/>
</dbReference>
<dbReference type="SMR" id="O43133"/>
<dbReference type="BioGRID" id="1230734">
    <property type="interactions" value="1"/>
</dbReference>
<dbReference type="FunCoup" id="O43133">
    <property type="interactions" value="1181"/>
</dbReference>
<dbReference type="STRING" id="237561.O43133"/>
<dbReference type="EnsemblFungi" id="C1_10660W_A-T">
    <property type="protein sequence ID" value="C1_10660W_A-T-p1"/>
    <property type="gene ID" value="C1_10660W_A"/>
</dbReference>
<dbReference type="GeneID" id="3647675"/>
<dbReference type="KEGG" id="cal:CAALFM_C110660WA"/>
<dbReference type="CGD" id="CAL0000189736">
    <property type="gene designation" value="TBP1"/>
</dbReference>
<dbReference type="VEuPathDB" id="FungiDB:C1_10660W_A"/>
<dbReference type="eggNOG" id="KOG3302">
    <property type="taxonomic scope" value="Eukaryota"/>
</dbReference>
<dbReference type="HOGENOM" id="CLU_060161_4_2_1"/>
<dbReference type="InParanoid" id="O43133"/>
<dbReference type="OMA" id="FHFKIAE"/>
<dbReference type="OrthoDB" id="2127950at2759"/>
<dbReference type="PRO" id="PR:O43133"/>
<dbReference type="Proteomes" id="UP000000559">
    <property type="component" value="Chromosome 1"/>
</dbReference>
<dbReference type="GO" id="GO:0000120">
    <property type="term" value="C:RNA polymerase I transcription regulator complex"/>
    <property type="evidence" value="ECO:0007669"/>
    <property type="project" value="EnsemblFungi"/>
</dbReference>
<dbReference type="GO" id="GO:0005669">
    <property type="term" value="C:transcription factor TFIID complex"/>
    <property type="evidence" value="ECO:0007669"/>
    <property type="project" value="EnsemblFungi"/>
</dbReference>
<dbReference type="GO" id="GO:0005667">
    <property type="term" value="C:transcription regulator complex"/>
    <property type="evidence" value="ECO:0000316"/>
    <property type="project" value="CGD"/>
</dbReference>
<dbReference type="GO" id="GO:0003677">
    <property type="term" value="F:DNA binding"/>
    <property type="evidence" value="ECO:0000314"/>
    <property type="project" value="CGD"/>
</dbReference>
<dbReference type="GO" id="GO:0003700">
    <property type="term" value="F:DNA-binding transcription factor activity"/>
    <property type="evidence" value="ECO:0000316"/>
    <property type="project" value="CGD"/>
</dbReference>
<dbReference type="GO" id="GO:0000979">
    <property type="term" value="F:RNA polymerase II core promoter sequence-specific DNA binding"/>
    <property type="evidence" value="ECO:0007669"/>
    <property type="project" value="EnsemblFungi"/>
</dbReference>
<dbReference type="GO" id="GO:0016251">
    <property type="term" value="F:RNA polymerase II general transcription initiation factor activity"/>
    <property type="evidence" value="ECO:0000318"/>
    <property type="project" value="GO_Central"/>
</dbReference>
<dbReference type="GO" id="GO:0001006">
    <property type="term" value="F:RNA polymerase III type 3 promoter sequence-specific DNA binding"/>
    <property type="evidence" value="ECO:0007669"/>
    <property type="project" value="EnsemblFungi"/>
</dbReference>
<dbReference type="GO" id="GO:0006352">
    <property type="term" value="P:DNA-templated transcription initiation"/>
    <property type="evidence" value="ECO:0000318"/>
    <property type="project" value="GO_Central"/>
</dbReference>
<dbReference type="GO" id="GO:0006361">
    <property type="term" value="P:transcription initiation at RNA polymerase I promoter"/>
    <property type="evidence" value="ECO:0007669"/>
    <property type="project" value="EnsemblFungi"/>
</dbReference>
<dbReference type="GO" id="GO:0006367">
    <property type="term" value="P:transcription initiation at RNA polymerase II promoter"/>
    <property type="evidence" value="ECO:0000316"/>
    <property type="project" value="CGD"/>
</dbReference>
<dbReference type="CDD" id="cd04516">
    <property type="entry name" value="TBP_eukaryotes"/>
    <property type="match status" value="1"/>
</dbReference>
<dbReference type="FunFam" id="3.30.310.10:FF:000001">
    <property type="entry name" value="TATA-box-binding protein 2"/>
    <property type="match status" value="1"/>
</dbReference>
<dbReference type="FunFam" id="3.30.310.10:FF:000002">
    <property type="entry name" value="TATA-box-binding protein 2"/>
    <property type="match status" value="1"/>
</dbReference>
<dbReference type="Gene3D" id="3.30.310.10">
    <property type="entry name" value="TATA-Binding Protein"/>
    <property type="match status" value="2"/>
</dbReference>
<dbReference type="HAMAP" id="MF_00408">
    <property type="entry name" value="TATA_bind_prot_arch"/>
    <property type="match status" value="1"/>
</dbReference>
<dbReference type="InterPro" id="IPR000814">
    <property type="entry name" value="TBP"/>
</dbReference>
<dbReference type="InterPro" id="IPR030491">
    <property type="entry name" value="TBP_CS"/>
</dbReference>
<dbReference type="InterPro" id="IPR012295">
    <property type="entry name" value="TBP_dom_sf"/>
</dbReference>
<dbReference type="InterPro" id="IPR033710">
    <property type="entry name" value="TBP_eukaryotic"/>
</dbReference>
<dbReference type="PANTHER" id="PTHR10126">
    <property type="entry name" value="TATA-BOX BINDING PROTEIN"/>
    <property type="match status" value="1"/>
</dbReference>
<dbReference type="Pfam" id="PF00352">
    <property type="entry name" value="TBP"/>
    <property type="match status" value="2"/>
</dbReference>
<dbReference type="PRINTS" id="PR00686">
    <property type="entry name" value="TIFACTORIID"/>
</dbReference>
<dbReference type="SUPFAM" id="SSF55945">
    <property type="entry name" value="TATA-box binding protein-like"/>
    <property type="match status" value="2"/>
</dbReference>
<dbReference type="PROSITE" id="PS00351">
    <property type="entry name" value="TFIID"/>
    <property type="match status" value="2"/>
</dbReference>
<accession>O43133</accession>
<accession>A0A1D8PEW8</accession>
<accession>Q59LW4</accession>
<feature type="chain" id="PRO_0000153987" description="TATA-box-binding protein">
    <location>
        <begin position="1"/>
        <end position="238"/>
    </location>
</feature>
<feature type="repeat" description="1">
    <location>
        <begin position="65"/>
        <end position="141"/>
    </location>
</feature>
<feature type="repeat" description="2">
    <location>
        <begin position="155"/>
        <end position="232"/>
    </location>
</feature>
<feature type="region of interest" description="Disordered" evidence="1">
    <location>
        <begin position="1"/>
        <end position="58"/>
    </location>
</feature>
<feature type="compositionally biased region" description="Basic and acidic residues" evidence="1">
    <location>
        <begin position="27"/>
        <end position="49"/>
    </location>
</feature>
<comment type="function">
    <text>General transcription factor that functions at the core of the DNA-binding multiprotein factor TFIID. Binding of TFIID to the TATA box is the initial transcriptional step of the pre-initiation complex (PIC), playing a role in the activation of eukaryotic genes transcribed by RNA polymerase II.</text>
</comment>
<comment type="subunit">
    <text>Belongs to the TFIID complex together with the TBP-associated factors (TAFs). Binds DNA as monomer.</text>
</comment>
<comment type="subcellular location">
    <subcellularLocation>
        <location>Nucleus</location>
    </subcellularLocation>
</comment>
<comment type="similarity">
    <text evidence="2">Belongs to the TBP family.</text>
</comment>
<name>TBP_CANAL</name>
<reference key="1">
    <citation type="journal article" date="1998" name="J. Bacteriol.">
        <title>The TATA-binding protein (TBP) from the human fungal pathogen Candida albicans can complement defects in human and yeast TBPs.</title>
        <authorList>
            <person name="Leng P."/>
            <person name="Carter P.E."/>
            <person name="Brown A.J.P."/>
        </authorList>
    </citation>
    <scope>NUCLEOTIDE SEQUENCE [GENOMIC DNA / MRNA]</scope>
    <source>
        <strain>ATCC 10261 / 3153</strain>
    </source>
</reference>
<reference key="2">
    <citation type="journal article" date="2004" name="Proc. Natl. Acad. Sci. U.S.A.">
        <title>The diploid genome sequence of Candida albicans.</title>
        <authorList>
            <person name="Jones T."/>
            <person name="Federspiel N.A."/>
            <person name="Chibana H."/>
            <person name="Dungan J."/>
            <person name="Kalman S."/>
            <person name="Magee B.B."/>
            <person name="Newport G."/>
            <person name="Thorstenson Y.R."/>
            <person name="Agabian N."/>
            <person name="Magee P.T."/>
            <person name="Davis R.W."/>
            <person name="Scherer S."/>
        </authorList>
    </citation>
    <scope>NUCLEOTIDE SEQUENCE [LARGE SCALE GENOMIC DNA]</scope>
    <source>
        <strain>SC5314 / ATCC MYA-2876</strain>
    </source>
</reference>
<reference key="3">
    <citation type="journal article" date="2007" name="Genome Biol.">
        <title>Assembly of the Candida albicans genome into sixteen supercontigs aligned on the eight chromosomes.</title>
        <authorList>
            <person name="van het Hoog M."/>
            <person name="Rast T.J."/>
            <person name="Martchenko M."/>
            <person name="Grindle S."/>
            <person name="Dignard D."/>
            <person name="Hogues H."/>
            <person name="Cuomo C."/>
            <person name="Berriman M."/>
            <person name="Scherer S."/>
            <person name="Magee B.B."/>
            <person name="Whiteway M."/>
            <person name="Chibana H."/>
            <person name="Nantel A."/>
            <person name="Magee P.T."/>
        </authorList>
    </citation>
    <scope>GENOME REANNOTATION</scope>
    <source>
        <strain>SC5314 / ATCC MYA-2876</strain>
    </source>
</reference>
<reference key="4">
    <citation type="journal article" date="2013" name="Genome Biol.">
        <title>Assembly of a phased diploid Candida albicans genome facilitates allele-specific measurements and provides a simple model for repeat and indel structure.</title>
        <authorList>
            <person name="Muzzey D."/>
            <person name="Schwartz K."/>
            <person name="Weissman J.S."/>
            <person name="Sherlock G."/>
        </authorList>
    </citation>
    <scope>NUCLEOTIDE SEQUENCE [LARGE SCALE GENOMIC DNA]</scope>
    <scope>GENOME REANNOTATION</scope>
    <source>
        <strain>SC5314 / ATCC MYA-2876</strain>
    </source>
</reference>